<feature type="signal peptide" evidence="3">
    <location>
        <begin position="1"/>
        <end position="22"/>
    </location>
</feature>
<feature type="chain" id="PRO_0000031857" description="Phosphate-binding protein PstS 3">
    <location>
        <begin position="23"/>
        <end position="370"/>
    </location>
</feature>
<feature type="binding site" evidence="2">
    <location>
        <begin position="56"/>
        <end position="58"/>
    </location>
    <ligand>
        <name>phosphate</name>
        <dbReference type="ChEBI" id="CHEBI:43474"/>
    </ligand>
</feature>
<feature type="binding site" evidence="2">
    <location>
        <position position="86"/>
    </location>
    <ligand>
        <name>phosphate</name>
        <dbReference type="ChEBI" id="CHEBI:43474"/>
    </ligand>
</feature>
<feature type="binding site" evidence="2">
    <location>
        <position position="104"/>
    </location>
    <ligand>
        <name>phosphate</name>
        <dbReference type="ChEBI" id="CHEBI:43474"/>
    </ligand>
</feature>
<feature type="binding site" evidence="2">
    <location>
        <begin position="191"/>
        <end position="193"/>
    </location>
    <ligand>
        <name>phosphate</name>
        <dbReference type="ChEBI" id="CHEBI:43474"/>
    </ligand>
</feature>
<feature type="lipid moiety-binding region" description="N-palmitoyl cysteine" evidence="3">
    <location>
        <position position="23"/>
    </location>
</feature>
<feature type="lipid moiety-binding region" description="S-diacylglycerol cysteine" evidence="3">
    <location>
        <position position="23"/>
    </location>
</feature>
<accession>P0A5Y3</accession>
<accession>A0A1R3XWV1</accession>
<accession>O86343</accession>
<accession>Q50794</accession>
<accession>X2BGL4</accession>
<evidence type="ECO:0000250" key="1"/>
<evidence type="ECO:0000250" key="2">
    <source>
        <dbReference type="UniProtKB" id="P9WGT7"/>
    </source>
</evidence>
<evidence type="ECO:0000255" key="3">
    <source>
        <dbReference type="PROSITE-ProRule" id="PRU00303"/>
    </source>
</evidence>
<evidence type="ECO:0000305" key="4"/>
<sequence length="370" mass="37953">MKLNRFGAAVGVLAAGALVLSACGNDDNVTGGGATTGQASAKVDCGGKKTLKASGSTAQANAMTRFVNVFEQACPGQTLNYTANGSGAGISEFNGNQTDFGGSDVPLSKDEAAAAQRRCGSPAWNLPVVFGPIAVTYNLNSVSSLNLDGPTLAKIFNGSITQWNNPAIQALNRDFTLPGERIHVVFRSDESGTTDNFQRYLQAASNGAWGKGAGKSFQGGVGEGARGNDGTSAAAKNTPGSITYNEWSFAQAQHLTMANIVTSAGGDPVAITIDSVGQTIAGATISGVGNDLVLDTDSFYRPKRPGSYPIVLATYEIVCSKYPDSQVGTAVKAFLQSTIGAGQSGLGDNGYIPIPDEFKSRLSTAVNAIA</sequence>
<gene>
    <name type="primary">pstS3</name>
    <name type="synonym">phoS2</name>
    <name type="ordered locus">BQ2027_MB0951</name>
</gene>
<reference key="1">
    <citation type="journal article" date="2003" name="Proc. Natl. Acad. Sci. U.S.A.">
        <title>The complete genome sequence of Mycobacterium bovis.</title>
        <authorList>
            <person name="Garnier T."/>
            <person name="Eiglmeier K."/>
            <person name="Camus J.-C."/>
            <person name="Medina N."/>
            <person name="Mansoor H."/>
            <person name="Pryor M."/>
            <person name="Duthoy S."/>
            <person name="Grondin S."/>
            <person name="Lacroix C."/>
            <person name="Monsempe C."/>
            <person name="Simon S."/>
            <person name="Harris B."/>
            <person name="Atkin R."/>
            <person name="Doggett J."/>
            <person name="Mayes R."/>
            <person name="Keating L."/>
            <person name="Wheeler P.R."/>
            <person name="Parkhill J."/>
            <person name="Barrell B.G."/>
            <person name="Cole S.T."/>
            <person name="Gordon S.V."/>
            <person name="Hewinson R.G."/>
        </authorList>
    </citation>
    <scope>NUCLEOTIDE SEQUENCE [LARGE SCALE GENOMIC DNA]</scope>
    <source>
        <strain>ATCC BAA-935 / AF2122/97</strain>
    </source>
</reference>
<reference key="2">
    <citation type="journal article" date="2017" name="Genome Announc.">
        <title>Updated reference genome sequence and annotation of Mycobacterium bovis AF2122/97.</title>
        <authorList>
            <person name="Malone K.M."/>
            <person name="Farrell D."/>
            <person name="Stuber T.P."/>
            <person name="Schubert O.T."/>
            <person name="Aebersold R."/>
            <person name="Robbe-Austerman S."/>
            <person name="Gordon S.V."/>
        </authorList>
    </citation>
    <scope>NUCLEOTIDE SEQUENCE [LARGE SCALE GENOMIC DNA]</scope>
    <scope>GENOME REANNOTATION</scope>
    <source>
        <strain>ATCC BAA-935 / AF2122/97</strain>
    </source>
</reference>
<keyword id="KW-1003">Cell membrane</keyword>
<keyword id="KW-0449">Lipoprotein</keyword>
<keyword id="KW-0472">Membrane</keyword>
<keyword id="KW-0564">Palmitate</keyword>
<keyword id="KW-0592">Phosphate transport</keyword>
<keyword id="KW-1185">Reference proteome</keyword>
<keyword id="KW-0732">Signal</keyword>
<keyword id="KW-0346">Stress response</keyword>
<keyword id="KW-0813">Transport</keyword>
<protein>
    <recommendedName>
        <fullName>Phosphate-binding protein PstS 3</fullName>
        <shortName>PBP 3</shortName>
        <shortName>PstS-3</shortName>
    </recommendedName>
    <alternativeName>
        <fullName>Antigen Ag88</fullName>
    </alternativeName>
</protein>
<dbReference type="EMBL" id="LT708304">
    <property type="protein sequence ID" value="SIT99549.1"/>
    <property type="molecule type" value="Genomic_DNA"/>
</dbReference>
<dbReference type="RefSeq" id="NP_854608.1">
    <property type="nucleotide sequence ID" value="NC_002945.3"/>
</dbReference>
<dbReference type="SMR" id="P0A5Y3"/>
<dbReference type="KEGG" id="mbo:BQ2027_MB0951"/>
<dbReference type="PATRIC" id="fig|233413.5.peg.1036"/>
<dbReference type="Proteomes" id="UP000001419">
    <property type="component" value="Chromosome"/>
</dbReference>
<dbReference type="GO" id="GO:0043190">
    <property type="term" value="C:ATP-binding cassette (ABC) transporter complex"/>
    <property type="evidence" value="ECO:0007669"/>
    <property type="project" value="InterPro"/>
</dbReference>
<dbReference type="GO" id="GO:0042301">
    <property type="term" value="F:phosphate ion binding"/>
    <property type="evidence" value="ECO:0007669"/>
    <property type="project" value="InterPro"/>
</dbReference>
<dbReference type="GO" id="GO:0035435">
    <property type="term" value="P:phosphate ion transmembrane transport"/>
    <property type="evidence" value="ECO:0007669"/>
    <property type="project" value="InterPro"/>
</dbReference>
<dbReference type="CDD" id="cd13565">
    <property type="entry name" value="PBP2_PstS"/>
    <property type="match status" value="1"/>
</dbReference>
<dbReference type="Gene3D" id="3.40.190.10">
    <property type="entry name" value="Periplasmic binding protein-like II"/>
    <property type="match status" value="2"/>
</dbReference>
<dbReference type="InterPro" id="IPR005673">
    <property type="entry name" value="ABC_phos-bd_PstS"/>
</dbReference>
<dbReference type="InterPro" id="IPR024370">
    <property type="entry name" value="PBP_domain"/>
</dbReference>
<dbReference type="InterPro" id="IPR050962">
    <property type="entry name" value="Phosphate-bind_PstS"/>
</dbReference>
<dbReference type="NCBIfam" id="TIGR00975">
    <property type="entry name" value="3a0107s03"/>
    <property type="match status" value="1"/>
</dbReference>
<dbReference type="PANTHER" id="PTHR42996">
    <property type="entry name" value="PHOSPHATE-BINDING PROTEIN PSTS"/>
    <property type="match status" value="1"/>
</dbReference>
<dbReference type="PANTHER" id="PTHR42996:SF1">
    <property type="entry name" value="PHOSPHATE-BINDING PROTEIN PSTS"/>
    <property type="match status" value="1"/>
</dbReference>
<dbReference type="Pfam" id="PF12849">
    <property type="entry name" value="PBP_like_2"/>
    <property type="match status" value="1"/>
</dbReference>
<dbReference type="PIRSF" id="PIRSF002756">
    <property type="entry name" value="PstS"/>
    <property type="match status" value="1"/>
</dbReference>
<dbReference type="SUPFAM" id="SSF53850">
    <property type="entry name" value="Periplasmic binding protein-like II"/>
    <property type="match status" value="1"/>
</dbReference>
<dbReference type="PROSITE" id="PS51257">
    <property type="entry name" value="PROKAR_LIPOPROTEIN"/>
    <property type="match status" value="1"/>
</dbReference>
<comment type="function">
    <text evidence="1">Part of the ABC transporter complex PstSACB involved in phosphate import.</text>
</comment>
<comment type="subunit">
    <text evidence="4">The complex is composed of two ATP-binding proteins (PstB), two transmembrane proteins (PstC and PstA) and a solute-binding protein (PstS).</text>
</comment>
<comment type="subcellular location">
    <subcellularLocation>
        <location evidence="4">Cell membrane</location>
        <topology evidence="4">Lipid-anchor</topology>
    </subcellularLocation>
</comment>
<comment type="induction">
    <text evidence="1">By phosphate starvation.</text>
</comment>
<comment type="similarity">
    <text evidence="4">Belongs to the PstS family.</text>
</comment>
<proteinExistence type="inferred from homology"/>
<name>PSTS3_MYCBO</name>
<organism>
    <name type="scientific">Mycobacterium bovis (strain ATCC BAA-935 / AF2122/97)</name>
    <dbReference type="NCBI Taxonomy" id="233413"/>
    <lineage>
        <taxon>Bacteria</taxon>
        <taxon>Bacillati</taxon>
        <taxon>Actinomycetota</taxon>
        <taxon>Actinomycetes</taxon>
        <taxon>Mycobacteriales</taxon>
        <taxon>Mycobacteriaceae</taxon>
        <taxon>Mycobacterium</taxon>
        <taxon>Mycobacterium tuberculosis complex</taxon>
    </lineage>
</organism>